<name>PSRP_SHEPA</name>
<accession>A8H5N3</accession>
<keyword id="KW-0418">Kinase</keyword>
<keyword id="KW-0547">Nucleotide-binding</keyword>
<keyword id="KW-1185">Reference proteome</keyword>
<keyword id="KW-0723">Serine/threonine-protein kinase</keyword>
<keyword id="KW-0808">Transferase</keyword>
<comment type="function">
    <text evidence="1">Bifunctional serine/threonine kinase and phosphorylase involved in the regulation of the phosphoenolpyruvate synthase (PEPS) by catalyzing its phosphorylation/dephosphorylation.</text>
</comment>
<comment type="catalytic activity">
    <reaction evidence="1">
        <text>[pyruvate, water dikinase] + ADP = [pyruvate, water dikinase]-phosphate + AMP + H(+)</text>
        <dbReference type="Rhea" id="RHEA:46020"/>
        <dbReference type="Rhea" id="RHEA-COMP:11425"/>
        <dbReference type="Rhea" id="RHEA-COMP:11426"/>
        <dbReference type="ChEBI" id="CHEBI:15378"/>
        <dbReference type="ChEBI" id="CHEBI:43176"/>
        <dbReference type="ChEBI" id="CHEBI:68546"/>
        <dbReference type="ChEBI" id="CHEBI:456215"/>
        <dbReference type="ChEBI" id="CHEBI:456216"/>
        <dbReference type="EC" id="2.7.11.33"/>
    </reaction>
</comment>
<comment type="catalytic activity">
    <reaction evidence="1">
        <text>[pyruvate, water dikinase]-phosphate + phosphate + H(+) = [pyruvate, water dikinase] + diphosphate</text>
        <dbReference type="Rhea" id="RHEA:48580"/>
        <dbReference type="Rhea" id="RHEA-COMP:11425"/>
        <dbReference type="Rhea" id="RHEA-COMP:11426"/>
        <dbReference type="ChEBI" id="CHEBI:15378"/>
        <dbReference type="ChEBI" id="CHEBI:33019"/>
        <dbReference type="ChEBI" id="CHEBI:43176"/>
        <dbReference type="ChEBI" id="CHEBI:43474"/>
        <dbReference type="ChEBI" id="CHEBI:68546"/>
        <dbReference type="EC" id="2.7.4.28"/>
    </reaction>
</comment>
<comment type="similarity">
    <text evidence="1">Belongs to the pyruvate, phosphate/water dikinase regulatory protein family. PSRP subfamily.</text>
</comment>
<evidence type="ECO:0000255" key="1">
    <source>
        <dbReference type="HAMAP-Rule" id="MF_01062"/>
    </source>
</evidence>
<feature type="chain" id="PRO_1000084474" description="Putative phosphoenolpyruvate synthase regulatory protein">
    <location>
        <begin position="1"/>
        <end position="270"/>
    </location>
</feature>
<feature type="binding site" evidence="1">
    <location>
        <begin position="150"/>
        <end position="157"/>
    </location>
    <ligand>
        <name>ADP</name>
        <dbReference type="ChEBI" id="CHEBI:456216"/>
    </ligand>
</feature>
<gene>
    <name type="ordered locus">Spea_2550</name>
</gene>
<sequence>MLRKVFYISDGTAITAEVFGHAVLSQFPLEFDALTIPFVETQEKAEAVKAQINDCFITTGERPLVFHSIVKAEIRDIIYSSEGLDYDFLNTFVAPLEKQLGVAAAPALHRTHGKANESYEARIDAINYAMENDDGQTMKHMDKADLILLGVSRCGKTPSSLYLSMQFGIKAANYPFTEDDMDNLKLPEALKRNKHKLFGLTIDPERLHEIRHSRMSNSRYSSLRQCRVEVKEVEMLYKKERIPYVNTTNHSVEEIATKILEETGLKRHMF</sequence>
<proteinExistence type="inferred from homology"/>
<protein>
    <recommendedName>
        <fullName evidence="1">Putative phosphoenolpyruvate synthase regulatory protein</fullName>
        <shortName evidence="1">PEP synthase regulatory protein</shortName>
        <shortName evidence="1">PSRP</shortName>
        <ecNumber evidence="1">2.7.11.33</ecNumber>
        <ecNumber evidence="1">2.7.4.28</ecNumber>
    </recommendedName>
    <alternativeName>
        <fullName evidence="1">Pyruvate, water dikinase regulatory protein</fullName>
    </alternativeName>
</protein>
<organism>
    <name type="scientific">Shewanella pealeana (strain ATCC 700345 / ANG-SQ1)</name>
    <dbReference type="NCBI Taxonomy" id="398579"/>
    <lineage>
        <taxon>Bacteria</taxon>
        <taxon>Pseudomonadati</taxon>
        <taxon>Pseudomonadota</taxon>
        <taxon>Gammaproteobacteria</taxon>
        <taxon>Alteromonadales</taxon>
        <taxon>Shewanellaceae</taxon>
        <taxon>Shewanella</taxon>
    </lineage>
</organism>
<dbReference type="EC" id="2.7.11.33" evidence="1"/>
<dbReference type="EC" id="2.7.4.28" evidence="1"/>
<dbReference type="EMBL" id="CP000851">
    <property type="protein sequence ID" value="ABV87870.1"/>
    <property type="molecule type" value="Genomic_DNA"/>
</dbReference>
<dbReference type="RefSeq" id="WP_012155777.1">
    <property type="nucleotide sequence ID" value="NC_009901.1"/>
</dbReference>
<dbReference type="SMR" id="A8H5N3"/>
<dbReference type="STRING" id="398579.Spea_2550"/>
<dbReference type="KEGG" id="spl:Spea_2550"/>
<dbReference type="eggNOG" id="COG1806">
    <property type="taxonomic scope" value="Bacteria"/>
</dbReference>
<dbReference type="HOGENOM" id="CLU_046206_1_0_6"/>
<dbReference type="OrthoDB" id="9782201at2"/>
<dbReference type="Proteomes" id="UP000002608">
    <property type="component" value="Chromosome"/>
</dbReference>
<dbReference type="GO" id="GO:0043531">
    <property type="term" value="F:ADP binding"/>
    <property type="evidence" value="ECO:0007669"/>
    <property type="project" value="UniProtKB-UniRule"/>
</dbReference>
<dbReference type="GO" id="GO:0005524">
    <property type="term" value="F:ATP binding"/>
    <property type="evidence" value="ECO:0007669"/>
    <property type="project" value="InterPro"/>
</dbReference>
<dbReference type="GO" id="GO:0016776">
    <property type="term" value="F:phosphotransferase activity, phosphate group as acceptor"/>
    <property type="evidence" value="ECO:0007669"/>
    <property type="project" value="UniProtKB-UniRule"/>
</dbReference>
<dbReference type="GO" id="GO:0004674">
    <property type="term" value="F:protein serine/threonine kinase activity"/>
    <property type="evidence" value="ECO:0007669"/>
    <property type="project" value="UniProtKB-UniRule"/>
</dbReference>
<dbReference type="HAMAP" id="MF_01062">
    <property type="entry name" value="PSRP"/>
    <property type="match status" value="1"/>
</dbReference>
<dbReference type="InterPro" id="IPR005177">
    <property type="entry name" value="Kinase-pyrophosphorylase"/>
</dbReference>
<dbReference type="InterPro" id="IPR026530">
    <property type="entry name" value="PSRP"/>
</dbReference>
<dbReference type="NCBIfam" id="NF003742">
    <property type="entry name" value="PRK05339.1"/>
    <property type="match status" value="1"/>
</dbReference>
<dbReference type="PANTHER" id="PTHR31756">
    <property type="entry name" value="PYRUVATE, PHOSPHATE DIKINASE REGULATORY PROTEIN 1, CHLOROPLASTIC"/>
    <property type="match status" value="1"/>
</dbReference>
<dbReference type="PANTHER" id="PTHR31756:SF3">
    <property type="entry name" value="PYRUVATE, PHOSPHATE DIKINASE REGULATORY PROTEIN 1, CHLOROPLASTIC"/>
    <property type="match status" value="1"/>
</dbReference>
<dbReference type="Pfam" id="PF03618">
    <property type="entry name" value="Kinase-PPPase"/>
    <property type="match status" value="1"/>
</dbReference>
<reference key="1">
    <citation type="submission" date="2007-10" db="EMBL/GenBank/DDBJ databases">
        <title>Complete sequence of Shewanella pealeana ATCC 700345.</title>
        <authorList>
            <consortium name="US DOE Joint Genome Institute"/>
            <person name="Copeland A."/>
            <person name="Lucas S."/>
            <person name="Lapidus A."/>
            <person name="Barry K."/>
            <person name="Glavina del Rio T."/>
            <person name="Dalin E."/>
            <person name="Tice H."/>
            <person name="Pitluck S."/>
            <person name="Chertkov O."/>
            <person name="Brettin T."/>
            <person name="Bruce D."/>
            <person name="Detter J.C."/>
            <person name="Han C."/>
            <person name="Schmutz J."/>
            <person name="Larimer F."/>
            <person name="Land M."/>
            <person name="Hauser L."/>
            <person name="Kyrpides N."/>
            <person name="Kim E."/>
            <person name="Zhao J.-S.Z."/>
            <person name="Manno D."/>
            <person name="Hawari J."/>
            <person name="Richardson P."/>
        </authorList>
    </citation>
    <scope>NUCLEOTIDE SEQUENCE [LARGE SCALE GENOMIC DNA]</scope>
    <source>
        <strain>ATCC 700345 / ANG-SQ1</strain>
    </source>
</reference>